<dbReference type="EC" id="5.1.1.3" evidence="1"/>
<dbReference type="EMBL" id="AF282853">
    <property type="protein sequence ID" value="AAC44708.1"/>
    <property type="molecule type" value="Genomic_DNA"/>
</dbReference>
<dbReference type="EMBL" id="AE000511">
    <property type="protein sequence ID" value="AAD07615.1"/>
    <property type="molecule type" value="Genomic_DNA"/>
</dbReference>
<dbReference type="PIR" id="E64588">
    <property type="entry name" value="E64588"/>
</dbReference>
<dbReference type="RefSeq" id="NP_207344.1">
    <property type="nucleotide sequence ID" value="NC_000915.1"/>
</dbReference>
<dbReference type="RefSeq" id="WP_000690349.1">
    <property type="nucleotide sequence ID" value="NC_018939.1"/>
</dbReference>
<dbReference type="SMR" id="P56068"/>
<dbReference type="FunCoup" id="P56068">
    <property type="interactions" value="162"/>
</dbReference>
<dbReference type="IntAct" id="P56068">
    <property type="interactions" value="1"/>
</dbReference>
<dbReference type="STRING" id="85962.HP_0549"/>
<dbReference type="BindingDB" id="P56068"/>
<dbReference type="ChEMBL" id="CHEMBL6078"/>
<dbReference type="DrugCentral" id="P56068"/>
<dbReference type="PaxDb" id="85962-C694_02840"/>
<dbReference type="EnsemblBacteria" id="AAD07615">
    <property type="protein sequence ID" value="AAD07615"/>
    <property type="gene ID" value="HP_0549"/>
</dbReference>
<dbReference type="KEGG" id="heo:C694_02840"/>
<dbReference type="KEGG" id="hpy:HP_0549"/>
<dbReference type="PATRIC" id="fig|85962.47.peg.594"/>
<dbReference type="eggNOG" id="COG0796">
    <property type="taxonomic scope" value="Bacteria"/>
</dbReference>
<dbReference type="InParanoid" id="P56068"/>
<dbReference type="OrthoDB" id="9801055at2"/>
<dbReference type="PhylomeDB" id="P56068"/>
<dbReference type="SABIO-RK" id="P56068"/>
<dbReference type="UniPathway" id="UPA00219"/>
<dbReference type="Proteomes" id="UP000000429">
    <property type="component" value="Chromosome"/>
</dbReference>
<dbReference type="GO" id="GO:0008881">
    <property type="term" value="F:glutamate racemase activity"/>
    <property type="evidence" value="ECO:0000318"/>
    <property type="project" value="GO_Central"/>
</dbReference>
<dbReference type="GO" id="GO:0071555">
    <property type="term" value="P:cell wall organization"/>
    <property type="evidence" value="ECO:0007669"/>
    <property type="project" value="UniProtKB-KW"/>
</dbReference>
<dbReference type="GO" id="GO:0009252">
    <property type="term" value="P:peptidoglycan biosynthetic process"/>
    <property type="evidence" value="ECO:0000318"/>
    <property type="project" value="GO_Central"/>
</dbReference>
<dbReference type="GO" id="GO:0008360">
    <property type="term" value="P:regulation of cell shape"/>
    <property type="evidence" value="ECO:0007669"/>
    <property type="project" value="UniProtKB-KW"/>
</dbReference>
<dbReference type="FunFam" id="3.40.50.1860:FF:000001">
    <property type="entry name" value="Glutamate racemase"/>
    <property type="match status" value="1"/>
</dbReference>
<dbReference type="Gene3D" id="3.40.50.1860">
    <property type="match status" value="2"/>
</dbReference>
<dbReference type="HAMAP" id="MF_00258">
    <property type="entry name" value="Glu_racemase"/>
    <property type="match status" value="1"/>
</dbReference>
<dbReference type="InterPro" id="IPR015942">
    <property type="entry name" value="Asp/Glu/hydantoin_racemase"/>
</dbReference>
<dbReference type="InterPro" id="IPR001920">
    <property type="entry name" value="Asp/Glu_race"/>
</dbReference>
<dbReference type="InterPro" id="IPR018187">
    <property type="entry name" value="Asp/Glu_racemase_AS_1"/>
</dbReference>
<dbReference type="InterPro" id="IPR033134">
    <property type="entry name" value="Asp/Glu_racemase_AS_2"/>
</dbReference>
<dbReference type="InterPro" id="IPR004391">
    <property type="entry name" value="Glu_race"/>
</dbReference>
<dbReference type="NCBIfam" id="TIGR00067">
    <property type="entry name" value="glut_race"/>
    <property type="match status" value="1"/>
</dbReference>
<dbReference type="PANTHER" id="PTHR21198">
    <property type="entry name" value="GLUTAMATE RACEMASE"/>
    <property type="match status" value="1"/>
</dbReference>
<dbReference type="PANTHER" id="PTHR21198:SF2">
    <property type="entry name" value="GLUTAMATE RACEMASE"/>
    <property type="match status" value="1"/>
</dbReference>
<dbReference type="Pfam" id="PF01177">
    <property type="entry name" value="Asp_Glu_race"/>
    <property type="match status" value="1"/>
</dbReference>
<dbReference type="SUPFAM" id="SSF53681">
    <property type="entry name" value="Aspartate/glutamate racemase"/>
    <property type="match status" value="2"/>
</dbReference>
<dbReference type="PROSITE" id="PS00923">
    <property type="entry name" value="ASP_GLU_RACEMASE_1"/>
    <property type="match status" value="1"/>
</dbReference>
<dbReference type="PROSITE" id="PS00924">
    <property type="entry name" value="ASP_GLU_RACEMASE_2"/>
    <property type="match status" value="1"/>
</dbReference>
<keyword id="KW-0133">Cell shape</keyword>
<keyword id="KW-0961">Cell wall biogenesis/degradation</keyword>
<keyword id="KW-0413">Isomerase</keyword>
<keyword id="KW-0573">Peptidoglycan synthesis</keyword>
<keyword id="KW-1185">Reference proteome</keyword>
<organism>
    <name type="scientific">Helicobacter pylori (strain ATCC 700392 / 26695)</name>
    <name type="common">Campylobacter pylori</name>
    <dbReference type="NCBI Taxonomy" id="85962"/>
    <lineage>
        <taxon>Bacteria</taxon>
        <taxon>Pseudomonadati</taxon>
        <taxon>Campylobacterota</taxon>
        <taxon>Epsilonproteobacteria</taxon>
        <taxon>Campylobacterales</taxon>
        <taxon>Helicobacteraceae</taxon>
        <taxon>Helicobacter</taxon>
    </lineage>
</organism>
<comment type="function">
    <text evidence="1">Provides the (R)-glutamate required for cell wall biosynthesis.</text>
</comment>
<comment type="catalytic activity">
    <reaction evidence="1">
        <text>L-glutamate = D-glutamate</text>
        <dbReference type="Rhea" id="RHEA:12813"/>
        <dbReference type="ChEBI" id="CHEBI:29985"/>
        <dbReference type="ChEBI" id="CHEBI:29986"/>
        <dbReference type="EC" id="5.1.1.3"/>
    </reaction>
</comment>
<comment type="pathway">
    <text evidence="1">Cell wall biogenesis; peptidoglycan biosynthesis.</text>
</comment>
<comment type="similarity">
    <text evidence="1">Belongs to the aspartate/glutamate racemases family.</text>
</comment>
<name>MURI_HELPY</name>
<reference key="1">
    <citation type="journal article" date="1996" name="Proc. Natl. Acad. Sci. U.S.A.">
        <title>cag, a pathogenicity island of Helicobacter pylori, encodes type I-specific and disease-associated virulence factors.</title>
        <authorList>
            <person name="Censini S."/>
            <person name="Lange C."/>
            <person name="Xiang Z."/>
            <person name="Crabtree J."/>
            <person name="Ghiara P."/>
            <person name="Borodovsky M."/>
            <person name="Rappuoli R."/>
            <person name="Covacci A."/>
        </authorList>
    </citation>
    <scope>NUCLEOTIDE SEQUENCE [GENOMIC DNA]</scope>
    <source>
        <strain>DSM 4867 / CCUG 17874 / NCTC 11638</strain>
    </source>
</reference>
<reference key="2">
    <citation type="journal article" date="1997" name="Nature">
        <title>The complete genome sequence of the gastric pathogen Helicobacter pylori.</title>
        <authorList>
            <person name="Tomb J.-F."/>
            <person name="White O."/>
            <person name="Kerlavage A.R."/>
            <person name="Clayton R.A."/>
            <person name="Sutton G.G."/>
            <person name="Fleischmann R.D."/>
            <person name="Ketchum K.A."/>
            <person name="Klenk H.-P."/>
            <person name="Gill S.R."/>
            <person name="Dougherty B.A."/>
            <person name="Nelson K.E."/>
            <person name="Quackenbush J."/>
            <person name="Zhou L."/>
            <person name="Kirkness E.F."/>
            <person name="Peterson S.N."/>
            <person name="Loftus B.J."/>
            <person name="Richardson D.L."/>
            <person name="Dodson R.J."/>
            <person name="Khalak H.G."/>
            <person name="Glodek A."/>
            <person name="McKenney K."/>
            <person name="FitzGerald L.M."/>
            <person name="Lee N."/>
            <person name="Adams M.D."/>
            <person name="Hickey E.K."/>
            <person name="Berg D.E."/>
            <person name="Gocayne J.D."/>
            <person name="Utterback T.R."/>
            <person name="Peterson J.D."/>
            <person name="Kelley J.M."/>
            <person name="Cotton M.D."/>
            <person name="Weidman J.F."/>
            <person name="Fujii C."/>
            <person name="Bowman C."/>
            <person name="Watthey L."/>
            <person name="Wallin E."/>
            <person name="Hayes W.S."/>
            <person name="Borodovsky M."/>
            <person name="Karp P.D."/>
            <person name="Smith H.O."/>
            <person name="Fraser C.M."/>
            <person name="Venter J.C."/>
        </authorList>
    </citation>
    <scope>NUCLEOTIDE SEQUENCE [LARGE SCALE GENOMIC DNA]</scope>
    <source>
        <strain>ATCC 700392 / 26695</strain>
    </source>
</reference>
<sequence>MKIGVFDSGVGGFSVLKSLLKAQLFDEIIYYGDSARVPYGTKDPTTIKQFGLEALDFFKPHQIKLLIVACNTASALALEEMQKHSKIPVVGVIEPSILAIKRQVKDKNAPILVLGTKATIQSNAYDNALKQQGYLNVSHLATSLFVPLIEESILEGELLETCMRYYFTPLEILPEVVILGCTHFPLIAQKIEGYFMEHFALSTPPLLIHSGDAIVEYLQQNYALKKNACAFPKVEFHASGDVVWLEKQAKEWLKL</sequence>
<proteinExistence type="inferred from homology"/>
<feature type="chain" id="PRO_0000095476" description="Glutamate racemase">
    <location>
        <begin position="1"/>
        <end position="255"/>
    </location>
</feature>
<feature type="active site" description="Proton donor/acceptor" evidence="1">
    <location>
        <position position="70"/>
    </location>
</feature>
<feature type="active site" description="Proton donor/acceptor" evidence="1">
    <location>
        <position position="181"/>
    </location>
</feature>
<feature type="binding site" evidence="1">
    <location>
        <begin position="7"/>
        <end position="8"/>
    </location>
    <ligand>
        <name>substrate</name>
    </ligand>
</feature>
<feature type="binding site" evidence="1">
    <location>
        <begin position="39"/>
        <end position="40"/>
    </location>
    <ligand>
        <name>substrate</name>
    </ligand>
</feature>
<feature type="binding site" evidence="1">
    <location>
        <begin position="71"/>
        <end position="72"/>
    </location>
    <ligand>
        <name>substrate</name>
    </ligand>
</feature>
<feature type="binding site" evidence="1">
    <location>
        <begin position="182"/>
        <end position="183"/>
    </location>
    <ligand>
        <name>substrate</name>
    </ligand>
</feature>
<feature type="sequence conflict" description="In Ref. 1; AAC44708." evidence="2" ref="1">
    <original>K</original>
    <variation>E</variation>
    <location>
        <position position="64"/>
    </location>
</feature>
<feature type="sequence conflict" description="In Ref. 1; AAC44708." evidence="2" ref="1">
    <original>V</original>
    <variation>I</variation>
    <location>
        <position position="89"/>
    </location>
</feature>
<feature type="sequence conflict" description="In Ref. 1; AAC44708." evidence="2" ref="1">
    <original>E</original>
    <variation>K</variation>
    <location>
        <position position="171"/>
    </location>
</feature>
<feature type="sequence conflict" description="In Ref. 1; AAC44708." evidence="2" ref="1">
    <original>V</original>
    <variation>I</variation>
    <location>
        <position position="177"/>
    </location>
</feature>
<feature type="sequence conflict" description="In Ref. 1; AAC44708." evidence="2" ref="1">
    <original>E</original>
    <variation>G</variation>
    <location>
        <position position="216"/>
    </location>
</feature>
<feature type="sequence conflict" description="In Ref. 1; AAC44708." evidence="2" ref="1">
    <original>N</original>
    <variation>K</variation>
    <location>
        <position position="221"/>
    </location>
</feature>
<feature type="sequence conflict" description="In Ref. 1; AAC44708." evidence="2" ref="1">
    <original>C</original>
    <variation>H</variation>
    <location>
        <position position="229"/>
    </location>
</feature>
<feature type="sequence conflict" description="In Ref. 1; AAC44708." evidence="2" ref="1">
    <original>V</original>
    <variation>I</variation>
    <location>
        <position position="243"/>
    </location>
</feature>
<gene>
    <name evidence="1" type="primary">murI</name>
    <name type="synonym">glr</name>
    <name type="ordered locus">HP_0549</name>
</gene>
<accession>P56068</accession>
<accession>P94841</accession>
<evidence type="ECO:0000255" key="1">
    <source>
        <dbReference type="HAMAP-Rule" id="MF_00258"/>
    </source>
</evidence>
<evidence type="ECO:0000305" key="2"/>
<protein>
    <recommendedName>
        <fullName evidence="1">Glutamate racemase</fullName>
        <ecNumber evidence="1">5.1.1.3</ecNumber>
    </recommendedName>
</protein>